<name>TRMN6_FLAB3</name>
<gene>
    <name type="ordered locus">FIC_02159</name>
</gene>
<sequence>MKPFRFKKFTVQQHKEVFRVGTDGVLLGALADVSDAKNILEVGTGTGLVALMTAQRNPTSNITAIDVNPVAAELAAKNFLESHFGHRMRAMHCDYKTFGTQKKFDLIISNPPYFETNPSEKDATARQQRELSFKTLISKTAEILATEGRFCVIIPFPAGPTFEKTCEENKLFLLRRITVYGNANVEPKRLILEFSSNKNISVSEEIFVTEKAPRVYSEQYLKATADFHEFE</sequence>
<dbReference type="EC" id="2.1.1.223" evidence="1"/>
<dbReference type="EMBL" id="CP001673">
    <property type="protein sequence ID" value="ACU08595.1"/>
    <property type="molecule type" value="Genomic_DNA"/>
</dbReference>
<dbReference type="SMR" id="C6X2D2"/>
<dbReference type="STRING" id="531844.FIC_02159"/>
<dbReference type="KEGG" id="fba:FIC_02159"/>
<dbReference type="eggNOG" id="COG4123">
    <property type="taxonomic scope" value="Bacteria"/>
</dbReference>
<dbReference type="HOGENOM" id="CLU_061983_0_0_10"/>
<dbReference type="OrthoDB" id="5383291at2"/>
<dbReference type="Proteomes" id="UP000001512">
    <property type="component" value="Chromosome"/>
</dbReference>
<dbReference type="GO" id="GO:0005737">
    <property type="term" value="C:cytoplasm"/>
    <property type="evidence" value="ECO:0007669"/>
    <property type="project" value="UniProtKB-SubCell"/>
</dbReference>
<dbReference type="GO" id="GO:0003676">
    <property type="term" value="F:nucleic acid binding"/>
    <property type="evidence" value="ECO:0007669"/>
    <property type="project" value="InterPro"/>
</dbReference>
<dbReference type="GO" id="GO:0016430">
    <property type="term" value="F:tRNA (adenine-N6)-methyltransferase activity"/>
    <property type="evidence" value="ECO:0007669"/>
    <property type="project" value="UniProtKB-UniRule"/>
</dbReference>
<dbReference type="GO" id="GO:0032259">
    <property type="term" value="P:methylation"/>
    <property type="evidence" value="ECO:0007669"/>
    <property type="project" value="UniProtKB-KW"/>
</dbReference>
<dbReference type="GO" id="GO:0008033">
    <property type="term" value="P:tRNA processing"/>
    <property type="evidence" value="ECO:0007669"/>
    <property type="project" value="UniProtKB-UniRule"/>
</dbReference>
<dbReference type="CDD" id="cd02440">
    <property type="entry name" value="AdoMet_MTases"/>
    <property type="match status" value="1"/>
</dbReference>
<dbReference type="Gene3D" id="3.40.50.150">
    <property type="entry name" value="Vaccinia Virus protein VP39"/>
    <property type="match status" value="1"/>
</dbReference>
<dbReference type="HAMAP" id="MF_01872">
    <property type="entry name" value="tRNA_methyltr_YfiC"/>
    <property type="match status" value="1"/>
</dbReference>
<dbReference type="InterPro" id="IPR002052">
    <property type="entry name" value="DNA_methylase_N6_adenine_CS"/>
</dbReference>
<dbReference type="InterPro" id="IPR029063">
    <property type="entry name" value="SAM-dependent_MTases_sf"/>
</dbReference>
<dbReference type="InterPro" id="IPR007848">
    <property type="entry name" value="Small_mtfrase_dom"/>
</dbReference>
<dbReference type="InterPro" id="IPR050210">
    <property type="entry name" value="tRNA_Adenine-N(6)_MTase"/>
</dbReference>
<dbReference type="InterPro" id="IPR022882">
    <property type="entry name" value="tRNA_adenine-N6_MeTrfase"/>
</dbReference>
<dbReference type="PANTHER" id="PTHR47739">
    <property type="entry name" value="TRNA1(VAL) (ADENINE(37)-N6)-METHYLTRANSFERASE"/>
    <property type="match status" value="1"/>
</dbReference>
<dbReference type="PANTHER" id="PTHR47739:SF1">
    <property type="entry name" value="TRNA1(VAL) (ADENINE(37)-N6)-METHYLTRANSFERASE"/>
    <property type="match status" value="1"/>
</dbReference>
<dbReference type="Pfam" id="PF05175">
    <property type="entry name" value="MTS"/>
    <property type="match status" value="1"/>
</dbReference>
<dbReference type="PRINTS" id="PR00507">
    <property type="entry name" value="N12N6MTFRASE"/>
</dbReference>
<dbReference type="SUPFAM" id="SSF53335">
    <property type="entry name" value="S-adenosyl-L-methionine-dependent methyltransferases"/>
    <property type="match status" value="1"/>
</dbReference>
<dbReference type="PROSITE" id="PS00092">
    <property type="entry name" value="N6_MTASE"/>
    <property type="match status" value="1"/>
</dbReference>
<protein>
    <recommendedName>
        <fullName evidence="1">tRNA1(Val) (adenine(37)-N6)-methyltransferase</fullName>
        <ecNumber evidence="1">2.1.1.223</ecNumber>
    </recommendedName>
    <alternativeName>
        <fullName evidence="1">tRNA m6A37 methyltransferase</fullName>
    </alternativeName>
</protein>
<reference key="1">
    <citation type="journal article" date="2008" name="Extremophiles">
        <title>A bacterial ice-binding protein from the Vostok ice core.</title>
        <authorList>
            <person name="Raymond J.A."/>
            <person name="Christner B.C."/>
            <person name="Schuster S.C."/>
        </authorList>
    </citation>
    <scope>NUCLEOTIDE SEQUENCE [LARGE SCALE GENOMIC DNA]</scope>
    <source>
        <strain>3519-10</strain>
    </source>
</reference>
<organism>
    <name type="scientific">Flavobacteriaceae bacterium (strain 3519-10)</name>
    <dbReference type="NCBI Taxonomy" id="531844"/>
    <lineage>
        <taxon>Bacteria</taxon>
        <taxon>Pseudomonadati</taxon>
        <taxon>Bacteroidota</taxon>
        <taxon>Flavobacteriia</taxon>
        <taxon>Flavobacteriales</taxon>
        <taxon>Flavobacteriaceae</taxon>
    </lineage>
</organism>
<feature type="chain" id="PRO_0000387379" description="tRNA1(Val) (adenine(37)-N6)-methyltransferase">
    <location>
        <begin position="1"/>
        <end position="231"/>
    </location>
</feature>
<accession>C6X2D2</accession>
<evidence type="ECO:0000255" key="1">
    <source>
        <dbReference type="HAMAP-Rule" id="MF_01872"/>
    </source>
</evidence>
<keyword id="KW-0963">Cytoplasm</keyword>
<keyword id="KW-0489">Methyltransferase</keyword>
<keyword id="KW-1185">Reference proteome</keyword>
<keyword id="KW-0949">S-adenosyl-L-methionine</keyword>
<keyword id="KW-0808">Transferase</keyword>
<keyword id="KW-0819">tRNA processing</keyword>
<comment type="function">
    <text evidence="1">Specifically methylates the adenine in position 37 of tRNA(1)(Val) (anticodon cmo5UAC).</text>
</comment>
<comment type="catalytic activity">
    <reaction evidence="1">
        <text>adenosine(37) in tRNA1(Val) + S-adenosyl-L-methionine = N(6)-methyladenosine(37) in tRNA1(Val) + S-adenosyl-L-homocysteine + H(+)</text>
        <dbReference type="Rhea" id="RHEA:43160"/>
        <dbReference type="Rhea" id="RHEA-COMP:10369"/>
        <dbReference type="Rhea" id="RHEA-COMP:10370"/>
        <dbReference type="ChEBI" id="CHEBI:15378"/>
        <dbReference type="ChEBI" id="CHEBI:57856"/>
        <dbReference type="ChEBI" id="CHEBI:59789"/>
        <dbReference type="ChEBI" id="CHEBI:74411"/>
        <dbReference type="ChEBI" id="CHEBI:74449"/>
        <dbReference type="EC" id="2.1.1.223"/>
    </reaction>
</comment>
<comment type="subcellular location">
    <subcellularLocation>
        <location evidence="1">Cytoplasm</location>
    </subcellularLocation>
</comment>
<comment type="similarity">
    <text evidence="1">Belongs to the methyltransferase superfamily. tRNA (adenine-N(6)-)-methyltransferase family.</text>
</comment>
<proteinExistence type="inferred from homology"/>